<accession>Q3A2J9</accession>
<keyword id="KW-0067">ATP-binding</keyword>
<keyword id="KW-0436">Ligase</keyword>
<keyword id="KW-0547">Nucleotide-binding</keyword>
<keyword id="KW-0648">Protein biosynthesis</keyword>
<keyword id="KW-1185">Reference proteome</keyword>
<reference key="1">
    <citation type="submission" date="2005-10" db="EMBL/GenBank/DDBJ databases">
        <title>Complete sequence of Pelobacter carbinolicus DSM 2380.</title>
        <authorList>
            <person name="Copeland A."/>
            <person name="Lucas S."/>
            <person name="Lapidus A."/>
            <person name="Barry K."/>
            <person name="Detter J.C."/>
            <person name="Glavina T."/>
            <person name="Hammon N."/>
            <person name="Israni S."/>
            <person name="Pitluck S."/>
            <person name="Chertkov O."/>
            <person name="Schmutz J."/>
            <person name="Larimer F."/>
            <person name="Land M."/>
            <person name="Kyrpides N."/>
            <person name="Ivanova N."/>
            <person name="Richardson P."/>
        </authorList>
    </citation>
    <scope>NUCLEOTIDE SEQUENCE [LARGE SCALE GENOMIC DNA]</scope>
    <source>
        <strain>DSM 2380 / NBRC 103641 / GraBd1</strain>
    </source>
</reference>
<evidence type="ECO:0000255" key="1">
    <source>
        <dbReference type="HAMAP-Rule" id="MF_00121"/>
    </source>
</evidence>
<feature type="chain" id="PRO_0000241252" description="Aspartyl/glutamyl-tRNA(Asn/Gln) amidotransferase subunit B">
    <location>
        <begin position="1"/>
        <end position="478"/>
    </location>
</feature>
<name>GATB_SYNC1</name>
<proteinExistence type="inferred from homology"/>
<comment type="function">
    <text evidence="1">Allows the formation of correctly charged Asn-tRNA(Asn) or Gln-tRNA(Gln) through the transamidation of misacylated Asp-tRNA(Asn) or Glu-tRNA(Gln) in organisms which lack either or both of asparaginyl-tRNA or glutaminyl-tRNA synthetases. The reaction takes place in the presence of glutamine and ATP through an activated phospho-Asp-tRNA(Asn) or phospho-Glu-tRNA(Gln).</text>
</comment>
<comment type="catalytic activity">
    <reaction evidence="1">
        <text>L-glutamyl-tRNA(Gln) + L-glutamine + ATP + H2O = L-glutaminyl-tRNA(Gln) + L-glutamate + ADP + phosphate + H(+)</text>
        <dbReference type="Rhea" id="RHEA:17521"/>
        <dbReference type="Rhea" id="RHEA-COMP:9681"/>
        <dbReference type="Rhea" id="RHEA-COMP:9684"/>
        <dbReference type="ChEBI" id="CHEBI:15377"/>
        <dbReference type="ChEBI" id="CHEBI:15378"/>
        <dbReference type="ChEBI" id="CHEBI:29985"/>
        <dbReference type="ChEBI" id="CHEBI:30616"/>
        <dbReference type="ChEBI" id="CHEBI:43474"/>
        <dbReference type="ChEBI" id="CHEBI:58359"/>
        <dbReference type="ChEBI" id="CHEBI:78520"/>
        <dbReference type="ChEBI" id="CHEBI:78521"/>
        <dbReference type="ChEBI" id="CHEBI:456216"/>
    </reaction>
</comment>
<comment type="catalytic activity">
    <reaction evidence="1">
        <text>L-aspartyl-tRNA(Asn) + L-glutamine + ATP + H2O = L-asparaginyl-tRNA(Asn) + L-glutamate + ADP + phosphate + 2 H(+)</text>
        <dbReference type="Rhea" id="RHEA:14513"/>
        <dbReference type="Rhea" id="RHEA-COMP:9674"/>
        <dbReference type="Rhea" id="RHEA-COMP:9677"/>
        <dbReference type="ChEBI" id="CHEBI:15377"/>
        <dbReference type="ChEBI" id="CHEBI:15378"/>
        <dbReference type="ChEBI" id="CHEBI:29985"/>
        <dbReference type="ChEBI" id="CHEBI:30616"/>
        <dbReference type="ChEBI" id="CHEBI:43474"/>
        <dbReference type="ChEBI" id="CHEBI:58359"/>
        <dbReference type="ChEBI" id="CHEBI:78515"/>
        <dbReference type="ChEBI" id="CHEBI:78516"/>
        <dbReference type="ChEBI" id="CHEBI:456216"/>
    </reaction>
</comment>
<comment type="subunit">
    <text evidence="1">Heterotrimer of A, B and C subunits.</text>
</comment>
<comment type="similarity">
    <text evidence="1">Belongs to the GatB/GatE family. GatB subfamily.</text>
</comment>
<dbReference type="EC" id="6.3.5.-" evidence="1"/>
<dbReference type="EMBL" id="CP000142">
    <property type="protein sequence ID" value="ABA89408.1"/>
    <property type="molecule type" value="Genomic_DNA"/>
</dbReference>
<dbReference type="RefSeq" id="WP_011341921.1">
    <property type="nucleotide sequence ID" value="NC_007498.2"/>
</dbReference>
<dbReference type="SMR" id="Q3A2J9"/>
<dbReference type="STRING" id="338963.Pcar_2169"/>
<dbReference type="KEGG" id="pca:Pcar_2169"/>
<dbReference type="eggNOG" id="COG0064">
    <property type="taxonomic scope" value="Bacteria"/>
</dbReference>
<dbReference type="HOGENOM" id="CLU_019240_0_0_7"/>
<dbReference type="OrthoDB" id="9804078at2"/>
<dbReference type="Proteomes" id="UP000002534">
    <property type="component" value="Chromosome"/>
</dbReference>
<dbReference type="GO" id="GO:0050566">
    <property type="term" value="F:asparaginyl-tRNA synthase (glutamine-hydrolyzing) activity"/>
    <property type="evidence" value="ECO:0007669"/>
    <property type="project" value="RHEA"/>
</dbReference>
<dbReference type="GO" id="GO:0005524">
    <property type="term" value="F:ATP binding"/>
    <property type="evidence" value="ECO:0007669"/>
    <property type="project" value="UniProtKB-KW"/>
</dbReference>
<dbReference type="GO" id="GO:0050567">
    <property type="term" value="F:glutaminyl-tRNA synthase (glutamine-hydrolyzing) activity"/>
    <property type="evidence" value="ECO:0007669"/>
    <property type="project" value="UniProtKB-UniRule"/>
</dbReference>
<dbReference type="GO" id="GO:0070681">
    <property type="term" value="P:glutaminyl-tRNAGln biosynthesis via transamidation"/>
    <property type="evidence" value="ECO:0007669"/>
    <property type="project" value="TreeGrafter"/>
</dbReference>
<dbReference type="GO" id="GO:0006412">
    <property type="term" value="P:translation"/>
    <property type="evidence" value="ECO:0007669"/>
    <property type="project" value="UniProtKB-UniRule"/>
</dbReference>
<dbReference type="FunFam" id="1.10.10.410:FF:000001">
    <property type="entry name" value="Aspartyl/glutamyl-tRNA(Asn/Gln) amidotransferase subunit B"/>
    <property type="match status" value="1"/>
</dbReference>
<dbReference type="FunFam" id="1.10.150.380:FF:000001">
    <property type="entry name" value="Aspartyl/glutamyl-tRNA(Asn/Gln) amidotransferase subunit B"/>
    <property type="match status" value="1"/>
</dbReference>
<dbReference type="Gene3D" id="1.10.10.410">
    <property type="match status" value="1"/>
</dbReference>
<dbReference type="Gene3D" id="1.10.150.380">
    <property type="entry name" value="GatB domain, N-terminal subdomain"/>
    <property type="match status" value="1"/>
</dbReference>
<dbReference type="HAMAP" id="MF_00121">
    <property type="entry name" value="GatB"/>
    <property type="match status" value="1"/>
</dbReference>
<dbReference type="InterPro" id="IPR017959">
    <property type="entry name" value="Asn/Gln-tRNA_amidoTrfase_suB/E"/>
</dbReference>
<dbReference type="InterPro" id="IPR006075">
    <property type="entry name" value="Asn/Gln-tRNA_Trfase_suB/E_cat"/>
</dbReference>
<dbReference type="InterPro" id="IPR018027">
    <property type="entry name" value="Asn/Gln_amidotransferase"/>
</dbReference>
<dbReference type="InterPro" id="IPR003789">
    <property type="entry name" value="Asn/Gln_tRNA_amidoTrase-B-like"/>
</dbReference>
<dbReference type="InterPro" id="IPR004413">
    <property type="entry name" value="GatB"/>
</dbReference>
<dbReference type="InterPro" id="IPR042114">
    <property type="entry name" value="GatB_C_1"/>
</dbReference>
<dbReference type="InterPro" id="IPR023168">
    <property type="entry name" value="GatB_Yqey_C_2"/>
</dbReference>
<dbReference type="InterPro" id="IPR017958">
    <property type="entry name" value="Gln-tRNA_amidoTrfase_suB_CS"/>
</dbReference>
<dbReference type="InterPro" id="IPR014746">
    <property type="entry name" value="Gln_synth/guanido_kin_cat_dom"/>
</dbReference>
<dbReference type="NCBIfam" id="TIGR00133">
    <property type="entry name" value="gatB"/>
    <property type="match status" value="1"/>
</dbReference>
<dbReference type="NCBIfam" id="NF004012">
    <property type="entry name" value="PRK05477.1-2"/>
    <property type="match status" value="1"/>
</dbReference>
<dbReference type="NCBIfam" id="NF004014">
    <property type="entry name" value="PRK05477.1-4"/>
    <property type="match status" value="1"/>
</dbReference>
<dbReference type="NCBIfam" id="NF004015">
    <property type="entry name" value="PRK05477.1-5"/>
    <property type="match status" value="1"/>
</dbReference>
<dbReference type="PANTHER" id="PTHR11659">
    <property type="entry name" value="GLUTAMYL-TRNA GLN AMIDOTRANSFERASE SUBUNIT B MITOCHONDRIAL AND PROKARYOTIC PET112-RELATED"/>
    <property type="match status" value="1"/>
</dbReference>
<dbReference type="PANTHER" id="PTHR11659:SF0">
    <property type="entry name" value="GLUTAMYL-TRNA(GLN) AMIDOTRANSFERASE SUBUNIT B, MITOCHONDRIAL"/>
    <property type="match status" value="1"/>
</dbReference>
<dbReference type="Pfam" id="PF02934">
    <property type="entry name" value="GatB_N"/>
    <property type="match status" value="1"/>
</dbReference>
<dbReference type="Pfam" id="PF02637">
    <property type="entry name" value="GatB_Yqey"/>
    <property type="match status" value="1"/>
</dbReference>
<dbReference type="SMART" id="SM00845">
    <property type="entry name" value="GatB_Yqey"/>
    <property type="match status" value="1"/>
</dbReference>
<dbReference type="SUPFAM" id="SSF89095">
    <property type="entry name" value="GatB/YqeY motif"/>
    <property type="match status" value="1"/>
</dbReference>
<dbReference type="SUPFAM" id="SSF55931">
    <property type="entry name" value="Glutamine synthetase/guanido kinase"/>
    <property type="match status" value="1"/>
</dbReference>
<dbReference type="PROSITE" id="PS01234">
    <property type="entry name" value="GATB"/>
    <property type="match status" value="1"/>
</dbReference>
<sequence length="478" mass="53019">MTSRYEVVIGLEVHVQLTTQTKIFCNCSIAFGNQPNSQTCPVCLGLPGALPVLNRKVVEYAIKTGLATNCSIAPRSIFARKNYFYPDLPKGYQISQFELPICEHGRLDIDVDGTSKSIGITRIHMEEDAGKLLHDDGDTSRVDLNRACTPLMEIVSEPDMRSSDEAIAYLKKLHQIVVYLGVCDGNLEEGSFRCDANVSIRPWGQKEFGTRAELKNINSFRFIKQAIDYEIERQADILDDGGTVVQETRLFDTASGTTRSMRSKEEAHDYRYFPDPDLVPLIVSDDWVEQIRRELPELPEAKIARFVGELGIPQYDAEVLAADRAMAEYYDSLVKAHGNAKLCANWVMGELQRALNDSGAGIAECPVTPPMLAGILQRIDDNTISNKIAKTVFDAMWQSGKDADTIIEEQGLKQVTDTGAIEAVIDEVLAANPSQVEEYRGGKDKLMGFFVGQVMRATKGKANPKTLNELLKKKLTGE</sequence>
<gene>
    <name evidence="1" type="primary">gatB</name>
    <name type="ordered locus">Pcar_2169</name>
</gene>
<organism>
    <name type="scientific">Syntrophotalea carbinolica (strain DSM 2380 / NBRC 103641 / GraBd1)</name>
    <name type="common">Pelobacter carbinolicus</name>
    <dbReference type="NCBI Taxonomy" id="338963"/>
    <lineage>
        <taxon>Bacteria</taxon>
        <taxon>Pseudomonadati</taxon>
        <taxon>Thermodesulfobacteriota</taxon>
        <taxon>Desulfuromonadia</taxon>
        <taxon>Desulfuromonadales</taxon>
        <taxon>Syntrophotaleaceae</taxon>
        <taxon>Syntrophotalea</taxon>
    </lineage>
</organism>
<protein>
    <recommendedName>
        <fullName evidence="1">Aspartyl/glutamyl-tRNA(Asn/Gln) amidotransferase subunit B</fullName>
        <shortName evidence="1">Asp/Glu-ADT subunit B</shortName>
        <ecNumber evidence="1">6.3.5.-</ecNumber>
    </recommendedName>
</protein>